<evidence type="ECO:0000250" key="1"/>
<evidence type="ECO:0000255" key="2"/>
<evidence type="ECO:0000305" key="3"/>
<evidence type="ECO:0007829" key="4">
    <source>
        <dbReference type="PDB" id="1BGC"/>
    </source>
</evidence>
<keyword id="KW-0002">3D-structure</keyword>
<keyword id="KW-0202">Cytokine</keyword>
<keyword id="KW-1015">Disulfide bond</keyword>
<keyword id="KW-0325">Glycoprotein</keyword>
<keyword id="KW-0339">Growth factor</keyword>
<keyword id="KW-1185">Reference proteome</keyword>
<keyword id="KW-0964">Secreted</keyword>
<keyword id="KW-0732">Signal</keyword>
<accession>P35833</accession>
<accession>Q9TV89</accession>
<organism>
    <name type="scientific">Bos taurus</name>
    <name type="common">Bovine</name>
    <dbReference type="NCBI Taxonomy" id="9913"/>
    <lineage>
        <taxon>Eukaryota</taxon>
        <taxon>Metazoa</taxon>
        <taxon>Chordata</taxon>
        <taxon>Craniata</taxon>
        <taxon>Vertebrata</taxon>
        <taxon>Euteleostomi</taxon>
        <taxon>Mammalia</taxon>
        <taxon>Eutheria</taxon>
        <taxon>Laurasiatheria</taxon>
        <taxon>Artiodactyla</taxon>
        <taxon>Ruminantia</taxon>
        <taxon>Pecora</taxon>
        <taxon>Bovidae</taxon>
        <taxon>Bovinae</taxon>
        <taxon>Bos</taxon>
    </lineage>
</organism>
<proteinExistence type="evidence at protein level"/>
<feature type="signal peptide" evidence="2">
    <location>
        <begin position="1"/>
        <end position="21"/>
    </location>
</feature>
<feature type="chain" id="PRO_0000015568" description="Granulocyte colony-stimulating factor">
    <location>
        <begin position="22"/>
        <end position="195"/>
    </location>
</feature>
<feature type="glycosylation site" description="O-linked (GalNAc...) threonine" evidence="1">
    <location>
        <position position="154"/>
    </location>
</feature>
<feature type="disulfide bond">
    <location>
        <begin position="57"/>
        <end position="63"/>
    </location>
</feature>
<feature type="disulfide bond">
    <location>
        <begin position="85"/>
        <end position="95"/>
    </location>
</feature>
<feature type="sequence conflict" description="In Ref. 2." evidence="3" ref="2">
    <original>TS</original>
    <variation>RG</variation>
    <location>
        <begin position="93"/>
        <end position="94"/>
    </location>
</feature>
<feature type="helix" evidence="4">
    <location>
        <begin position="32"/>
        <end position="60"/>
    </location>
</feature>
<feature type="helix" evidence="4">
    <location>
        <begin position="65"/>
        <end position="69"/>
    </location>
</feature>
<feature type="helix" evidence="4">
    <location>
        <begin position="72"/>
        <end position="75"/>
    </location>
</feature>
<feature type="helix" evidence="4">
    <location>
        <begin position="83"/>
        <end position="85"/>
    </location>
</feature>
<feature type="turn" evidence="4">
    <location>
        <begin position="87"/>
        <end position="89"/>
    </location>
</feature>
<feature type="helix" evidence="4">
    <location>
        <begin position="92"/>
        <end position="112"/>
    </location>
</feature>
<feature type="turn" evidence="4">
    <location>
        <begin position="113"/>
        <end position="115"/>
    </location>
</feature>
<feature type="turn" evidence="4">
    <location>
        <begin position="118"/>
        <end position="120"/>
    </location>
</feature>
<feature type="helix" evidence="4">
    <location>
        <begin position="121"/>
        <end position="145"/>
    </location>
</feature>
<feature type="helix" evidence="4">
    <location>
        <begin position="164"/>
        <end position="191"/>
    </location>
</feature>
<name>CSF3_BOVIN</name>
<protein>
    <recommendedName>
        <fullName>Granulocyte colony-stimulating factor</fullName>
        <shortName>G-CSF</shortName>
    </recommendedName>
</protein>
<gene>
    <name type="primary">CSF3</name>
    <name type="synonym">GCSF</name>
</gene>
<sequence length="195" mass="21431">MKLMVLQLLLWHSALWTVHEATPLGPARSLPQSFLLKCLEQVRKIQADGAELQERLCAAHKLCHPEELMLLRHSLGIPQAPLSSCSSQSLQLTSCLNQLHGGLFLYQGLLQALAGISPELAPTLDTLQLDVTDFATNIWLQMEDLGAAPAVQPTQGAMPTFTSAFQRRAGGVLVASQLHRFLELAYRGLRYLAEP</sequence>
<comment type="function">
    <text>Granulocyte/macrophage colony-stimulating factors are cytokines that act in hematopoiesis by controlling the production, differentiation, and function of 2 related white cell populations of the blood, the granulocytes and the monocytes-macrophages. This CSF induces granulocytes.</text>
</comment>
<comment type="subunit">
    <text>Monomer.</text>
</comment>
<comment type="subcellular location">
    <subcellularLocation>
        <location>Secreted</location>
    </subcellularLocation>
</comment>
<comment type="PTM">
    <text>O-glycosylated.</text>
</comment>
<comment type="similarity">
    <text evidence="3">Belongs to the IL-6 superfamily.</text>
</comment>
<reference key="1">
    <citation type="journal article" date="2000" name="Vet. Immunol. Immunopathol.">
        <title>Cloning, sequencing, and analysis of cDNA encoding bovine granulocyte-colony stimulating factor.</title>
        <authorList>
            <person name="Heidari M."/>
            <person name="Kehrli M.E. Jr."/>
        </authorList>
    </citation>
    <scope>NUCLEOTIDE SEQUENCE [MRNA]</scope>
    <source>
        <strain>Holstein</strain>
    </source>
</reference>
<reference key="2">
    <citation type="journal article" date="1993" name="J. Mol. Biol.">
        <title>Crystal structure of canine and bovine granulocyte-colony stimulating factor (G-CSF).</title>
        <authorList>
            <person name="Lovejoy B."/>
            <person name="Cascio D."/>
            <person name="Eisenberg D."/>
        </authorList>
    </citation>
    <scope>X-RAY CRYSTALLOGRAPHY (1.7 ANGSTROMS)</scope>
</reference>
<dbReference type="EMBL" id="AF092533">
    <property type="protein sequence ID" value="AAD16102.1"/>
    <property type="molecule type" value="mRNA"/>
</dbReference>
<dbReference type="RefSeq" id="NP_776453.1">
    <property type="nucleotide sequence ID" value="NM_174028.1"/>
</dbReference>
<dbReference type="PDB" id="1BGC">
    <property type="method" value="X-ray"/>
    <property type="resolution" value="1.70 A"/>
    <property type="chains" value="A=22-195"/>
</dbReference>
<dbReference type="PDBsum" id="1BGC"/>
<dbReference type="SMR" id="P35833"/>
<dbReference type="FunCoup" id="P35833">
    <property type="interactions" value="140"/>
</dbReference>
<dbReference type="STRING" id="9913.ENSBTAP00000028610"/>
<dbReference type="GlyCosmos" id="P35833">
    <property type="glycosylation" value="1 site, No reported glycans"/>
</dbReference>
<dbReference type="GlyGen" id="P35833">
    <property type="glycosylation" value="1 site"/>
</dbReference>
<dbReference type="PaxDb" id="9913-ENSBTAP00000028610"/>
<dbReference type="GeneID" id="281096"/>
<dbReference type="KEGG" id="bta:281096"/>
<dbReference type="CTD" id="1440"/>
<dbReference type="VEuPathDB" id="HostDB:ENSBTAG00000021462"/>
<dbReference type="eggNOG" id="ENOG502SCNA">
    <property type="taxonomic scope" value="Eukaryota"/>
</dbReference>
<dbReference type="HOGENOM" id="CLU_118367_0_0_1"/>
<dbReference type="InParanoid" id="P35833"/>
<dbReference type="OMA" id="APLEQCH"/>
<dbReference type="OrthoDB" id="9896489at2759"/>
<dbReference type="TreeFam" id="TF337698"/>
<dbReference type="Reactome" id="R-BTA-449836">
    <property type="pathway name" value="Other interleukin signaling"/>
</dbReference>
<dbReference type="Reactome" id="R-BTA-9674555">
    <property type="pathway name" value="Signaling by CSF3 (G-CSF)"/>
</dbReference>
<dbReference type="Reactome" id="R-BTA-9705462">
    <property type="pathway name" value="Inactivation of CSF3 (G-CSF) signaling"/>
</dbReference>
<dbReference type="EvolutionaryTrace" id="P35833"/>
<dbReference type="Proteomes" id="UP000009136">
    <property type="component" value="Chromosome 19"/>
</dbReference>
<dbReference type="Bgee" id="ENSBTAG00000021462">
    <property type="expression patterns" value="Expressed in intramuscular adipose tissue and 55 other cell types or tissues"/>
</dbReference>
<dbReference type="GO" id="GO:0005615">
    <property type="term" value="C:extracellular space"/>
    <property type="evidence" value="ECO:0000318"/>
    <property type="project" value="GO_Central"/>
</dbReference>
<dbReference type="GO" id="GO:0005125">
    <property type="term" value="F:cytokine activity"/>
    <property type="evidence" value="ECO:0000318"/>
    <property type="project" value="GO_Central"/>
</dbReference>
<dbReference type="GO" id="GO:0005130">
    <property type="term" value="F:granulocyte colony-stimulating factor receptor binding"/>
    <property type="evidence" value="ECO:0000318"/>
    <property type="project" value="GO_Central"/>
</dbReference>
<dbReference type="GO" id="GO:0008083">
    <property type="term" value="F:growth factor activity"/>
    <property type="evidence" value="ECO:0000318"/>
    <property type="project" value="GO_Central"/>
</dbReference>
<dbReference type="GO" id="GO:0006955">
    <property type="term" value="P:immune response"/>
    <property type="evidence" value="ECO:0007669"/>
    <property type="project" value="InterPro"/>
</dbReference>
<dbReference type="GO" id="GO:0009891">
    <property type="term" value="P:positive regulation of biosynthetic process"/>
    <property type="evidence" value="ECO:0007669"/>
    <property type="project" value="UniProtKB-ARBA"/>
</dbReference>
<dbReference type="GO" id="GO:0008284">
    <property type="term" value="P:positive regulation of cell population proliferation"/>
    <property type="evidence" value="ECO:0000318"/>
    <property type="project" value="GO_Central"/>
</dbReference>
<dbReference type="GO" id="GO:0045639">
    <property type="term" value="P:positive regulation of myeloid cell differentiation"/>
    <property type="evidence" value="ECO:0000318"/>
    <property type="project" value="GO_Central"/>
</dbReference>
<dbReference type="FunFam" id="1.20.1250.10:FF:000021">
    <property type="entry name" value="Granulocyte colony-stimulating factor"/>
    <property type="match status" value="1"/>
</dbReference>
<dbReference type="Gene3D" id="1.20.1250.10">
    <property type="match status" value="1"/>
</dbReference>
<dbReference type="InterPro" id="IPR009079">
    <property type="entry name" value="4_helix_cytokine-like_core"/>
</dbReference>
<dbReference type="InterPro" id="IPR040117">
    <property type="entry name" value="GCSF/MGF"/>
</dbReference>
<dbReference type="InterPro" id="IPR030474">
    <property type="entry name" value="IL-6/GCSF/MGF"/>
</dbReference>
<dbReference type="InterPro" id="IPR030473">
    <property type="entry name" value="IL6/GCSF/MGF_CS"/>
</dbReference>
<dbReference type="PANTHER" id="PTHR10511">
    <property type="entry name" value="GRANULOCYTE COLONY-STIMULATING FACTOR"/>
    <property type="match status" value="1"/>
</dbReference>
<dbReference type="PANTHER" id="PTHR10511:SF2">
    <property type="entry name" value="GRANULOCYTE COLONY-STIMULATING FACTOR"/>
    <property type="match status" value="1"/>
</dbReference>
<dbReference type="Pfam" id="PF16647">
    <property type="entry name" value="GCSF"/>
    <property type="match status" value="1"/>
</dbReference>
<dbReference type="PIRSF" id="PIRSF001935">
    <property type="entry name" value="IL6_MGF_GCSF"/>
    <property type="match status" value="1"/>
</dbReference>
<dbReference type="PRINTS" id="PR00433">
    <property type="entry name" value="IL6GCSFMGF"/>
</dbReference>
<dbReference type="SMART" id="SM00126">
    <property type="entry name" value="IL6"/>
    <property type="match status" value="1"/>
</dbReference>
<dbReference type="SUPFAM" id="SSF47266">
    <property type="entry name" value="4-helical cytokines"/>
    <property type="match status" value="1"/>
</dbReference>
<dbReference type="PROSITE" id="PS00254">
    <property type="entry name" value="INTERLEUKIN_6"/>
    <property type="match status" value="1"/>
</dbReference>